<keyword id="KW-1185">Reference proteome</keyword>
<dbReference type="EMBL" id="X17217">
    <property type="protein sequence ID" value="CAA35089.1"/>
    <property type="molecule type" value="Genomic_DNA"/>
</dbReference>
<dbReference type="EMBL" id="U46933">
    <property type="protein sequence ID" value="AAC54929.1"/>
    <property type="molecule type" value="Genomic_DNA"/>
</dbReference>
<dbReference type="PIR" id="S10007">
    <property type="entry name" value="S10007"/>
</dbReference>
<dbReference type="RefSeq" id="NP_043903.1">
    <property type="nucleotide sequence ID" value="NC_001720.1"/>
</dbReference>
<dbReference type="KEGG" id="vg:1733458"/>
<dbReference type="Proteomes" id="UP000001594">
    <property type="component" value="Segment"/>
</dbReference>
<accession>P20744</accession>
<proteinExistence type="predicted"/>
<feature type="chain" id="PRO_0000221938" description="Uncharacterized protein ORF16">
    <location>
        <begin position="1"/>
        <end position="139"/>
    </location>
</feature>
<protein>
    <recommendedName>
        <fullName>Uncharacterized protein ORF16</fullName>
    </recommendedName>
</protein>
<sequence length="139" mass="16292">MYYFHLRVTLMEPNLAVFHDLKLTVINAWESLTVEMLSHYSVDYLFRLEEFAGVYSASIFLPTHKVDWTFLKRAVALLRECIWRRFECTQVPRGVASIYAVRNTWTPSANRVARHFVKRGALVGMQPCLHECTYERDAC</sequence>
<name>YO16_ADEG1</name>
<organismHost>
    <name type="scientific">Galliformes</name>
    <dbReference type="NCBI Taxonomy" id="8976"/>
</organismHost>
<organism>
    <name type="scientific">Fowl adenovirus A serotype 1 (strain CELO / Phelps)</name>
    <name type="common">FAdV-1</name>
    <name type="synonym">Avian adenovirus gal1 (strain Phelps)</name>
    <dbReference type="NCBI Taxonomy" id="10553"/>
    <lineage>
        <taxon>Viruses</taxon>
        <taxon>Varidnaviria</taxon>
        <taxon>Bamfordvirae</taxon>
        <taxon>Preplasmiviricota</taxon>
        <taxon>Tectiliviricetes</taxon>
        <taxon>Rowavirales</taxon>
        <taxon>Adenoviridae</taxon>
        <taxon>Aviadenovirus</taxon>
        <taxon>Fowl aviadenovirus A</taxon>
    </lineage>
</organism>
<gene>
    <name type="ORF">16</name>
</gene>
<reference key="1">
    <citation type="journal article" date="1990" name="Nucleic Acids Res.">
        <title>Sequence of an avian adenovirus (CELO) DNA fragment (0-11.2%).</title>
        <authorList>
            <person name="Akopian T.A."/>
            <person name="Kruglyak V.A."/>
            <person name="Rivkina M.B."/>
            <person name="Naroditsky B.S."/>
            <person name="Tikhonenko T.I."/>
        </authorList>
    </citation>
    <scope>NUCLEOTIDE SEQUENCE [GENOMIC DNA]</scope>
</reference>
<reference key="2">
    <citation type="journal article" date="1996" name="J. Virol.">
        <title>The complete DNA sequence and genomic organization of the avian adenovirus CELO.</title>
        <authorList>
            <person name="Chiocca S."/>
            <person name="Kurzbauer R."/>
            <person name="Schaffner G."/>
            <person name="Baker A."/>
            <person name="Mautner V."/>
            <person name="Cotten M."/>
        </authorList>
    </citation>
    <scope>NUCLEOTIDE SEQUENCE [LARGE SCALE GENOMIC DNA]</scope>
</reference>